<keyword id="KW-0963">Cytoplasm</keyword>
<keyword id="KW-0251">Elongation factor</keyword>
<keyword id="KW-0648">Protein biosynthesis</keyword>
<reference key="1">
    <citation type="submission" date="2008-05" db="EMBL/GenBank/DDBJ databases">
        <title>Complete genome sequence of Clostridium botulinum E3 str. Alaska E43.</title>
        <authorList>
            <person name="Brinkac L.M."/>
            <person name="Brown J.L."/>
            <person name="Bruce D."/>
            <person name="Detter C."/>
            <person name="Munk C."/>
            <person name="Smith L.A."/>
            <person name="Smith T.J."/>
            <person name="Sutton G."/>
            <person name="Brettin T.S."/>
        </authorList>
    </citation>
    <scope>NUCLEOTIDE SEQUENCE [LARGE SCALE GENOMIC DNA]</scope>
    <source>
        <strain>Alaska E43 / Type E3</strain>
    </source>
</reference>
<gene>
    <name evidence="1" type="primary">tsf</name>
    <name type="ordered locus">CLH_1210</name>
</gene>
<organism>
    <name type="scientific">Clostridium botulinum (strain Alaska E43 / Type E3)</name>
    <dbReference type="NCBI Taxonomy" id="508767"/>
    <lineage>
        <taxon>Bacteria</taxon>
        <taxon>Bacillati</taxon>
        <taxon>Bacillota</taxon>
        <taxon>Clostridia</taxon>
        <taxon>Eubacteriales</taxon>
        <taxon>Clostridiaceae</taxon>
        <taxon>Clostridium</taxon>
    </lineage>
</organism>
<dbReference type="EMBL" id="CP001078">
    <property type="protein sequence ID" value="ACD52924.1"/>
    <property type="molecule type" value="Genomic_DNA"/>
</dbReference>
<dbReference type="RefSeq" id="WP_012450949.1">
    <property type="nucleotide sequence ID" value="NC_010723.1"/>
</dbReference>
<dbReference type="SMR" id="B2V4F5"/>
<dbReference type="KEGG" id="cbt:CLH_1210"/>
<dbReference type="HOGENOM" id="CLU_047155_0_0_9"/>
<dbReference type="GO" id="GO:0005737">
    <property type="term" value="C:cytoplasm"/>
    <property type="evidence" value="ECO:0007669"/>
    <property type="project" value="UniProtKB-SubCell"/>
</dbReference>
<dbReference type="GO" id="GO:0003746">
    <property type="term" value="F:translation elongation factor activity"/>
    <property type="evidence" value="ECO:0007669"/>
    <property type="project" value="UniProtKB-UniRule"/>
</dbReference>
<dbReference type="CDD" id="cd14275">
    <property type="entry name" value="UBA_EF-Ts"/>
    <property type="match status" value="1"/>
</dbReference>
<dbReference type="FunFam" id="1.10.286.20:FF:000001">
    <property type="entry name" value="Elongation factor Ts"/>
    <property type="match status" value="1"/>
</dbReference>
<dbReference type="FunFam" id="1.10.8.10:FF:000001">
    <property type="entry name" value="Elongation factor Ts"/>
    <property type="match status" value="1"/>
</dbReference>
<dbReference type="Gene3D" id="1.10.286.20">
    <property type="match status" value="1"/>
</dbReference>
<dbReference type="Gene3D" id="1.10.8.10">
    <property type="entry name" value="DNA helicase RuvA subunit, C-terminal domain"/>
    <property type="match status" value="1"/>
</dbReference>
<dbReference type="Gene3D" id="3.30.479.20">
    <property type="entry name" value="Elongation factor Ts, dimerisation domain"/>
    <property type="match status" value="2"/>
</dbReference>
<dbReference type="HAMAP" id="MF_00050">
    <property type="entry name" value="EF_Ts"/>
    <property type="match status" value="1"/>
</dbReference>
<dbReference type="InterPro" id="IPR036402">
    <property type="entry name" value="EF-Ts_dimer_sf"/>
</dbReference>
<dbReference type="InterPro" id="IPR001816">
    <property type="entry name" value="Transl_elong_EFTs/EF1B"/>
</dbReference>
<dbReference type="InterPro" id="IPR014039">
    <property type="entry name" value="Transl_elong_EFTs/EF1B_dimer"/>
</dbReference>
<dbReference type="InterPro" id="IPR018101">
    <property type="entry name" value="Transl_elong_Ts_CS"/>
</dbReference>
<dbReference type="InterPro" id="IPR009060">
    <property type="entry name" value="UBA-like_sf"/>
</dbReference>
<dbReference type="NCBIfam" id="TIGR00116">
    <property type="entry name" value="tsf"/>
    <property type="match status" value="1"/>
</dbReference>
<dbReference type="PANTHER" id="PTHR11741">
    <property type="entry name" value="ELONGATION FACTOR TS"/>
    <property type="match status" value="1"/>
</dbReference>
<dbReference type="PANTHER" id="PTHR11741:SF0">
    <property type="entry name" value="ELONGATION FACTOR TS, MITOCHONDRIAL"/>
    <property type="match status" value="1"/>
</dbReference>
<dbReference type="Pfam" id="PF00889">
    <property type="entry name" value="EF_TS"/>
    <property type="match status" value="1"/>
</dbReference>
<dbReference type="SUPFAM" id="SSF54713">
    <property type="entry name" value="Elongation factor Ts (EF-Ts), dimerisation domain"/>
    <property type="match status" value="2"/>
</dbReference>
<dbReference type="SUPFAM" id="SSF46934">
    <property type="entry name" value="UBA-like"/>
    <property type="match status" value="1"/>
</dbReference>
<dbReference type="PROSITE" id="PS01126">
    <property type="entry name" value="EF_TS_1"/>
    <property type="match status" value="1"/>
</dbReference>
<dbReference type="PROSITE" id="PS01127">
    <property type="entry name" value="EF_TS_2"/>
    <property type="match status" value="1"/>
</dbReference>
<feature type="chain" id="PRO_1000116714" description="Elongation factor Ts">
    <location>
        <begin position="1"/>
        <end position="303"/>
    </location>
</feature>
<feature type="region of interest" description="Involved in Mg(2+) ion dislocation from EF-Tu" evidence="1">
    <location>
        <begin position="80"/>
        <end position="83"/>
    </location>
</feature>
<comment type="function">
    <text evidence="1">Associates with the EF-Tu.GDP complex and induces the exchange of GDP to GTP. It remains bound to the aminoacyl-tRNA.EF-Tu.GTP complex up to the GTP hydrolysis stage on the ribosome.</text>
</comment>
<comment type="subcellular location">
    <subcellularLocation>
        <location evidence="1">Cytoplasm</location>
    </subcellularLocation>
</comment>
<comment type="similarity">
    <text evidence="1">Belongs to the EF-Ts family.</text>
</comment>
<name>EFTS_CLOBA</name>
<sequence length="303" mass="33356">MISAKSVKELRERTGAGMMDCKKALTETDGDIEKAVEVLREKGLAAAAKKSGRVAAEGLVKTYISEDKKSGAIVELNCETDFVAANEDFIAFADALAKIATSTSATTVEELVNEKFDAEATIQEALTGLIARLGENMTVRRFVKFSVDNGVVKSYIHGGGRIGVLVEVACDVESPAVEEVAKELCMQIAAANPLFLSKEEVDQDSIEKEKEIYRVQALNEGKPEKIVEKMVMGRIQKYYKEVCLLEQLWVKDSDKTITKFIDEKAKEAGSAIKVNRFVRFERGEGIEKVEENFAEEVAKQLGK</sequence>
<accession>B2V4F5</accession>
<protein>
    <recommendedName>
        <fullName evidence="1">Elongation factor Ts</fullName>
        <shortName evidence="1">EF-Ts</shortName>
    </recommendedName>
</protein>
<proteinExistence type="inferred from homology"/>
<evidence type="ECO:0000255" key="1">
    <source>
        <dbReference type="HAMAP-Rule" id="MF_00050"/>
    </source>
</evidence>